<sequence>MSTNHRPQLESKRGKVIKIKDTIQHARGLPQQTSIKYRQDIKNEKTINKFDDLQKHDNNKITSLESISPPTKKLKIESTKEITTEPLNQEIDKQSKLSLKNDDQSDIQPNEKSESDEEDSKDEEDDESSDDDDSDDDDTALLLKEIENIRREKEKQNSDSTNNSINNSLTLQTHDSSTKKKSWRSSTTFNNKSKKESTNDRNNNYTTDTLNSQHHQKFMSKYIR</sequence>
<feature type="chain" id="PRO_0000218237" description="Pre-mRNA-splicing factor CWC15">
    <location>
        <begin position="1"/>
        <end position="224"/>
    </location>
</feature>
<feature type="region of interest" description="Disordered" evidence="2">
    <location>
        <begin position="1"/>
        <end position="37"/>
    </location>
</feature>
<feature type="region of interest" description="Disordered" evidence="2">
    <location>
        <begin position="52"/>
        <end position="224"/>
    </location>
</feature>
<feature type="compositionally biased region" description="Basic and acidic residues" evidence="2">
    <location>
        <begin position="7"/>
        <end position="24"/>
    </location>
</feature>
<feature type="compositionally biased region" description="Polar residues" evidence="2">
    <location>
        <begin position="60"/>
        <end position="69"/>
    </location>
</feature>
<feature type="compositionally biased region" description="Basic and acidic residues" evidence="2">
    <location>
        <begin position="74"/>
        <end position="83"/>
    </location>
</feature>
<feature type="compositionally biased region" description="Basic and acidic residues" evidence="2">
    <location>
        <begin position="90"/>
        <end position="113"/>
    </location>
</feature>
<feature type="compositionally biased region" description="Acidic residues" evidence="2">
    <location>
        <begin position="114"/>
        <end position="139"/>
    </location>
</feature>
<feature type="compositionally biased region" description="Basic and acidic residues" evidence="2">
    <location>
        <begin position="144"/>
        <end position="157"/>
    </location>
</feature>
<feature type="compositionally biased region" description="Low complexity" evidence="2">
    <location>
        <begin position="158"/>
        <end position="168"/>
    </location>
</feature>
<feature type="compositionally biased region" description="Low complexity" evidence="2">
    <location>
        <begin position="200"/>
        <end position="211"/>
    </location>
</feature>
<feature type="compositionally biased region" description="Basic residues" evidence="2">
    <location>
        <begin position="214"/>
        <end position="224"/>
    </location>
</feature>
<organism>
    <name type="scientific">Candida albicans (strain SC5314 / ATCC MYA-2876)</name>
    <name type="common">Yeast</name>
    <dbReference type="NCBI Taxonomy" id="237561"/>
    <lineage>
        <taxon>Eukaryota</taxon>
        <taxon>Fungi</taxon>
        <taxon>Dikarya</taxon>
        <taxon>Ascomycota</taxon>
        <taxon>Saccharomycotina</taxon>
        <taxon>Pichiomycetes</taxon>
        <taxon>Debaryomycetaceae</taxon>
        <taxon>Candida/Lodderomyces clade</taxon>
        <taxon>Candida</taxon>
    </lineage>
</organism>
<protein>
    <recommendedName>
        <fullName>Pre-mRNA-splicing factor CWC15</fullName>
    </recommendedName>
</protein>
<evidence type="ECO:0000250" key="1"/>
<evidence type="ECO:0000256" key="2">
    <source>
        <dbReference type="SAM" id="MobiDB-lite"/>
    </source>
</evidence>
<evidence type="ECO:0000305" key="3"/>
<accession>Q59PD3</accession>
<accession>A0A1D8PFG2</accession>
<keyword id="KW-0507">mRNA processing</keyword>
<keyword id="KW-0508">mRNA splicing</keyword>
<keyword id="KW-0539">Nucleus</keyword>
<keyword id="KW-1185">Reference proteome</keyword>
<keyword id="KW-0747">Spliceosome</keyword>
<name>CWC15_CANAL</name>
<reference key="1">
    <citation type="journal article" date="2004" name="Proc. Natl. Acad. Sci. U.S.A.">
        <title>The diploid genome sequence of Candida albicans.</title>
        <authorList>
            <person name="Jones T."/>
            <person name="Federspiel N.A."/>
            <person name="Chibana H."/>
            <person name="Dungan J."/>
            <person name="Kalman S."/>
            <person name="Magee B.B."/>
            <person name="Newport G."/>
            <person name="Thorstenson Y.R."/>
            <person name="Agabian N."/>
            <person name="Magee P.T."/>
            <person name="Davis R.W."/>
            <person name="Scherer S."/>
        </authorList>
    </citation>
    <scope>NUCLEOTIDE SEQUENCE [LARGE SCALE GENOMIC DNA]</scope>
    <source>
        <strain>SC5314 / ATCC MYA-2876</strain>
    </source>
</reference>
<reference key="2">
    <citation type="journal article" date="2007" name="Genome Biol.">
        <title>Assembly of the Candida albicans genome into sixteen supercontigs aligned on the eight chromosomes.</title>
        <authorList>
            <person name="van het Hoog M."/>
            <person name="Rast T.J."/>
            <person name="Martchenko M."/>
            <person name="Grindle S."/>
            <person name="Dignard D."/>
            <person name="Hogues H."/>
            <person name="Cuomo C."/>
            <person name="Berriman M."/>
            <person name="Scherer S."/>
            <person name="Magee B.B."/>
            <person name="Whiteway M."/>
            <person name="Chibana H."/>
            <person name="Nantel A."/>
            <person name="Magee P.T."/>
        </authorList>
    </citation>
    <scope>GENOME REANNOTATION</scope>
    <source>
        <strain>SC5314 / ATCC MYA-2876</strain>
    </source>
</reference>
<reference key="3">
    <citation type="journal article" date="2013" name="Genome Biol.">
        <title>Assembly of a phased diploid Candida albicans genome facilitates allele-specific measurements and provides a simple model for repeat and indel structure.</title>
        <authorList>
            <person name="Muzzey D."/>
            <person name="Schwartz K."/>
            <person name="Weissman J.S."/>
            <person name="Sherlock G."/>
        </authorList>
    </citation>
    <scope>NUCLEOTIDE SEQUENCE [LARGE SCALE GENOMIC DNA]</scope>
    <scope>GENOME REANNOTATION</scope>
    <source>
        <strain>SC5314 / ATCC MYA-2876</strain>
    </source>
</reference>
<dbReference type="EMBL" id="CP017623">
    <property type="protein sequence ID" value="AOW26878.1"/>
    <property type="molecule type" value="Genomic_DNA"/>
</dbReference>
<dbReference type="RefSeq" id="XP_711578.1">
    <property type="nucleotide sequence ID" value="XM_706486.2"/>
</dbReference>
<dbReference type="FunCoup" id="Q59PD3">
    <property type="interactions" value="163"/>
</dbReference>
<dbReference type="STRING" id="237561.Q59PD3"/>
<dbReference type="EnsemblFungi" id="C1_12630C_A-T">
    <property type="protein sequence ID" value="C1_12630C_A-T-p1"/>
    <property type="gene ID" value="C1_12630C_A"/>
</dbReference>
<dbReference type="GeneID" id="3646838"/>
<dbReference type="KEGG" id="cal:CAALFM_C112630CA"/>
<dbReference type="CGD" id="CAL0000187979">
    <property type="gene designation" value="orf19.13717"/>
</dbReference>
<dbReference type="VEuPathDB" id="FungiDB:C1_12630C_A"/>
<dbReference type="eggNOG" id="KOG3228">
    <property type="taxonomic scope" value="Eukaryota"/>
</dbReference>
<dbReference type="HOGENOM" id="CLU_068312_1_0_1"/>
<dbReference type="InParanoid" id="Q59PD3"/>
<dbReference type="OMA" id="KYREHGQ"/>
<dbReference type="OrthoDB" id="30179at2759"/>
<dbReference type="PRO" id="PR:Q59PD3"/>
<dbReference type="Proteomes" id="UP000000559">
    <property type="component" value="Chromosome 1"/>
</dbReference>
<dbReference type="GO" id="GO:0071013">
    <property type="term" value="C:catalytic step 2 spliceosome"/>
    <property type="evidence" value="ECO:0000318"/>
    <property type="project" value="GO_Central"/>
</dbReference>
<dbReference type="GO" id="GO:0005634">
    <property type="term" value="C:nucleus"/>
    <property type="evidence" value="ECO:0000250"/>
    <property type="project" value="UniProtKB"/>
</dbReference>
<dbReference type="GO" id="GO:0003723">
    <property type="term" value="F:RNA binding"/>
    <property type="evidence" value="ECO:0000250"/>
    <property type="project" value="UniProtKB"/>
</dbReference>
<dbReference type="GO" id="GO:0045292">
    <property type="term" value="P:mRNA cis splicing, via spliceosome"/>
    <property type="evidence" value="ECO:0000318"/>
    <property type="project" value="GO_Central"/>
</dbReference>
<dbReference type="GO" id="GO:0000398">
    <property type="term" value="P:mRNA splicing, via spliceosome"/>
    <property type="evidence" value="ECO:0000250"/>
    <property type="project" value="UniProtKB"/>
</dbReference>
<dbReference type="InterPro" id="IPR006973">
    <property type="entry name" value="Cwf_Cwc_15"/>
</dbReference>
<dbReference type="PANTHER" id="PTHR12718">
    <property type="entry name" value="CELL CYCLE CONTROL PROTEIN CWF15"/>
    <property type="match status" value="1"/>
</dbReference>
<dbReference type="PANTHER" id="PTHR12718:SF2">
    <property type="entry name" value="SPLICEOSOME-ASSOCIATED PROTEIN CWC15 HOMOLOG"/>
    <property type="match status" value="1"/>
</dbReference>
<dbReference type="Pfam" id="PF04889">
    <property type="entry name" value="Cwf_Cwc_15"/>
    <property type="match status" value="1"/>
</dbReference>
<proteinExistence type="inferred from homology"/>
<comment type="function">
    <text evidence="1">Involved in pre-mRNA splicing.</text>
</comment>
<comment type="subunit">
    <text evidence="1">Associated with the spliceosome.</text>
</comment>
<comment type="subcellular location">
    <subcellularLocation>
        <location evidence="3">Nucleus</location>
    </subcellularLocation>
</comment>
<comment type="similarity">
    <text evidence="3">Belongs to the CWC15 family.</text>
</comment>
<gene>
    <name type="primary">CWC15</name>
    <name type="ordered locus">CAALFM_C112630CA</name>
    <name type="ORF">CaO19.13717</name>
    <name type="ORF">CaO19.6360</name>
</gene>